<feature type="chain" id="PRO_0000451267" description="Sesquiterpene synthase PILCRDRAFT_825684">
    <location>
        <begin position="1"/>
        <end position="345"/>
    </location>
</feature>
<feature type="short sequence motif" description="DDXXD motif" evidence="1">
    <location>
        <begin position="91"/>
        <end position="95"/>
    </location>
</feature>
<feature type="binding site" evidence="2">
    <location>
        <position position="91"/>
    </location>
    <ligand>
        <name>Mg(2+)</name>
        <dbReference type="ChEBI" id="CHEBI:18420"/>
        <label>1</label>
    </ligand>
</feature>
<feature type="binding site" evidence="2">
    <location>
        <position position="91"/>
    </location>
    <ligand>
        <name>Mg(2+)</name>
        <dbReference type="ChEBI" id="CHEBI:18420"/>
        <label>2</label>
    </ligand>
</feature>
<feature type="binding site" evidence="2">
    <location>
        <position position="226"/>
    </location>
    <ligand>
        <name>Mg(2+)</name>
        <dbReference type="ChEBI" id="CHEBI:18420"/>
        <label>3</label>
    </ligand>
</feature>
<feature type="binding site" evidence="2">
    <location>
        <position position="230"/>
    </location>
    <ligand>
        <name>Mg(2+)</name>
        <dbReference type="ChEBI" id="CHEBI:18420"/>
        <label>3</label>
    </ligand>
</feature>
<feature type="binding site" evidence="2">
    <location>
        <position position="234"/>
    </location>
    <ligand>
        <name>Mg(2+)</name>
        <dbReference type="ChEBI" id="CHEBI:18420"/>
        <label>3</label>
    </ligand>
</feature>
<feature type="binding site" evidence="2">
    <location>
        <position position="316"/>
    </location>
    <ligand>
        <name>(2E,6E)-farnesyl diphosphate</name>
        <dbReference type="ChEBI" id="CHEBI:175763"/>
    </ligand>
</feature>
<feature type="binding site" evidence="2">
    <location>
        <position position="317"/>
    </location>
    <ligand>
        <name>(2E,6E)-farnesyl diphosphate</name>
        <dbReference type="ChEBI" id="CHEBI:175763"/>
    </ligand>
</feature>
<dbReference type="EC" id="4.2.3.-" evidence="3"/>
<dbReference type="EC" id="4.2.3.88" evidence="3"/>
<dbReference type="EMBL" id="KN833028">
    <property type="protein sequence ID" value="KIM77136.1"/>
    <property type="molecule type" value="Genomic_DNA"/>
</dbReference>
<dbReference type="SMR" id="A0A0C3FBR2"/>
<dbReference type="HOGENOM" id="CLU_042538_2_1_1"/>
<dbReference type="InParanoid" id="A0A0C3FBR2"/>
<dbReference type="OrthoDB" id="2861623at2759"/>
<dbReference type="Proteomes" id="UP000054166">
    <property type="component" value="Unassembled WGS sequence"/>
</dbReference>
<dbReference type="GO" id="GO:0046872">
    <property type="term" value="F:metal ion binding"/>
    <property type="evidence" value="ECO:0007669"/>
    <property type="project" value="UniProtKB-KW"/>
</dbReference>
<dbReference type="GO" id="GO:0010333">
    <property type="term" value="F:terpene synthase activity"/>
    <property type="evidence" value="ECO:0007669"/>
    <property type="project" value="InterPro"/>
</dbReference>
<dbReference type="GO" id="GO:0008299">
    <property type="term" value="P:isoprenoid biosynthetic process"/>
    <property type="evidence" value="ECO:0007669"/>
    <property type="project" value="UniProtKB-ARBA"/>
</dbReference>
<dbReference type="Gene3D" id="1.10.600.10">
    <property type="entry name" value="Farnesyl Diphosphate Synthase"/>
    <property type="match status" value="1"/>
</dbReference>
<dbReference type="InterPro" id="IPR008949">
    <property type="entry name" value="Isoprenoid_synthase_dom_sf"/>
</dbReference>
<dbReference type="InterPro" id="IPR034686">
    <property type="entry name" value="Terpene_cyclase-like_2"/>
</dbReference>
<dbReference type="PANTHER" id="PTHR35201:SF4">
    <property type="entry name" value="BETA-PINACENE SYNTHASE-RELATED"/>
    <property type="match status" value="1"/>
</dbReference>
<dbReference type="PANTHER" id="PTHR35201">
    <property type="entry name" value="TERPENE SYNTHASE"/>
    <property type="match status" value="1"/>
</dbReference>
<dbReference type="Pfam" id="PF19086">
    <property type="entry name" value="Terpene_syn_C_2"/>
    <property type="match status" value="1"/>
</dbReference>
<dbReference type="SFLD" id="SFLDS00005">
    <property type="entry name" value="Isoprenoid_Synthase_Type_I"/>
    <property type="match status" value="1"/>
</dbReference>
<dbReference type="SFLD" id="SFLDG01020">
    <property type="entry name" value="Terpene_Cyclase_Like_2"/>
    <property type="match status" value="1"/>
</dbReference>
<dbReference type="SUPFAM" id="SSF48576">
    <property type="entry name" value="Terpenoid synthases"/>
    <property type="match status" value="1"/>
</dbReference>
<name>TERS_PILCF</name>
<evidence type="ECO:0000250" key="1">
    <source>
        <dbReference type="UniProtKB" id="P0DL13"/>
    </source>
</evidence>
<evidence type="ECO:0000250" key="2">
    <source>
        <dbReference type="UniProtKB" id="Q9UR08"/>
    </source>
</evidence>
<evidence type="ECO:0000269" key="3">
    <source>
    </source>
</evidence>
<evidence type="ECO:0000303" key="4">
    <source>
    </source>
</evidence>
<reference key="1">
    <citation type="submission" date="2014-04" db="EMBL/GenBank/DDBJ databases">
        <authorList>
            <consortium name="DOE Joint Genome Institute"/>
            <person name="Kuo A."/>
            <person name="Tarkka M."/>
            <person name="Buscot F."/>
            <person name="Kohler A."/>
            <person name="Nagy L.G."/>
            <person name="Floudas D."/>
            <person name="Copeland A."/>
            <person name="Barry K.W."/>
            <person name="Cichocki N."/>
            <person name="Veneault-Fourrey C."/>
            <person name="LaButti K."/>
            <person name="Lindquist E.A."/>
            <person name="Lipzen A."/>
            <person name="Lundell T."/>
            <person name="Morin E."/>
            <person name="Murat C."/>
            <person name="Sun H."/>
            <person name="Tunlid A."/>
            <person name="Henrissat B."/>
            <person name="Grigoriev I.V."/>
            <person name="Hibbett D.S."/>
            <person name="Martin F."/>
            <person name="Nordberg H.P."/>
            <person name="Cantor M.N."/>
            <person name="Hua S.X."/>
        </authorList>
    </citation>
    <scope>NUCLEOTIDE SEQUENCE [LARGE SCALE GENOMIC DNA]</scope>
    <source>
        <strain>F 1598</strain>
    </source>
</reference>
<reference key="2">
    <citation type="submission" date="2015-01" db="EMBL/GenBank/DDBJ databases">
        <title>Evolutionary Origins and Diversification of the Mycorrhizal Mutualists.</title>
        <authorList>
            <consortium name="DOE Joint Genome Institute"/>
            <consortium name="Mycorrhizal Genomics Consortium"/>
            <person name="Kohler A."/>
            <person name="Kuo A."/>
            <person name="Nagy L.G."/>
            <person name="Floudas D."/>
            <person name="Copeland A."/>
            <person name="Barry K.W."/>
            <person name="Cichocki N."/>
            <person name="Veneault-Fourrey C."/>
            <person name="LaButti K."/>
            <person name="Lindquist E.A."/>
            <person name="Lipzen A."/>
            <person name="Lundell T."/>
            <person name="Morin E."/>
            <person name="Murat C."/>
            <person name="Riley R."/>
            <person name="Ohm R."/>
            <person name="Sun H."/>
            <person name="Tunlid A."/>
            <person name="Henrissat B."/>
            <person name="Grigoriev I.V."/>
            <person name="Hibbett D.S."/>
            <person name="Martin F."/>
        </authorList>
    </citation>
    <scope>NUCLEOTIDE SEQUENCE [LARGE SCALE GENOMIC DNA]</scope>
    <source>
        <strain>F 1598</strain>
    </source>
</reference>
<reference key="3">
    <citation type="journal article" date="2020" name="ACS Chem. Biol.">
        <title>Agrocybe aegerita serves as a gateway for identifying sesquiterpene biosynthetic enzymes in higher fungi.</title>
        <authorList>
            <person name="Zhang C."/>
            <person name="Chen X."/>
            <person name="Orban A."/>
            <person name="Shukal S."/>
            <person name="Birk F."/>
            <person name="Too H.P."/>
            <person name="Ruehl M."/>
        </authorList>
    </citation>
    <scope>FUNCTION</scope>
    <scope>DOMAIN</scope>
    <scope>CATALYTIC ACTIVITY</scope>
</reference>
<organism>
    <name type="scientific">Piloderma croceum (strain F 1598)</name>
    <dbReference type="NCBI Taxonomy" id="765440"/>
    <lineage>
        <taxon>Eukaryota</taxon>
        <taxon>Fungi</taxon>
        <taxon>Dikarya</taxon>
        <taxon>Basidiomycota</taxon>
        <taxon>Agaricomycotina</taxon>
        <taxon>Agaricomycetes</taxon>
        <taxon>Agaricomycetidae</taxon>
        <taxon>Atheliales</taxon>
        <taxon>Atheliaceae</taxon>
        <taxon>Piloderma</taxon>
    </lineage>
</organism>
<proteinExistence type="evidence at protein level"/>
<keyword id="KW-0456">Lyase</keyword>
<keyword id="KW-0460">Magnesium</keyword>
<keyword id="KW-0479">Metal-binding</keyword>
<keyword id="KW-1185">Reference proteome</keyword>
<gene>
    <name type="ORF">PILCRDRAFT_825684</name>
</gene>
<accession>A0A0C3FBR2</accession>
<comment type="function">
    <text evidence="3">Terpene cyclase that catalyzes the cyclization of farnesyl diphosphate (FPP) to various sesquiterpenes, including beta-elemene, viridiflorene and gamma-cadinene (PubMed:32233445). Gamma-cadinene is the major product of PILCRDRAFT_825684 (PubMed:32233445).</text>
</comment>
<comment type="catalytic activity">
    <reaction evidence="3">
        <text>(2E,6E)-farnesyl diphosphate = viridiflorene + diphosphate</text>
        <dbReference type="Rhea" id="RHEA:31811"/>
        <dbReference type="ChEBI" id="CHEBI:33019"/>
        <dbReference type="ChEBI" id="CHEBI:63444"/>
        <dbReference type="ChEBI" id="CHEBI:175763"/>
        <dbReference type="EC" id="4.2.3.88"/>
    </reaction>
    <physiologicalReaction direction="left-to-right" evidence="3">
        <dbReference type="Rhea" id="RHEA:31812"/>
    </physiologicalReaction>
</comment>
<comment type="cofactor">
    <cofactor evidence="3">
        <name>Mg(2+)</name>
        <dbReference type="ChEBI" id="CHEBI:18420"/>
    </cofactor>
</comment>
<comment type="domain">
    <text evidence="3">The DDXXD motif is important for the catalytic activity, presumably through binding to Mg(2+).</text>
</comment>
<comment type="similarity">
    <text evidence="3">Belongs to the terpene synthase family.</text>
</comment>
<protein>
    <recommendedName>
        <fullName evidence="4">Sesquiterpene synthase PILCRDRAFT_825684</fullName>
        <ecNumber evidence="3">4.2.3.-</ecNumber>
        <ecNumber evidence="3">4.2.3.88</ecNumber>
    </recommendedName>
    <alternativeName>
        <fullName evidence="4">Terpene cyclase PILCRDRAFT_825684</fullName>
    </alternativeName>
</protein>
<sequence length="345" mass="39099">MPSQSLTIRLPKFEETFSVFPDNGLNPHYANSRAESRAWINQYHHAVCGPNMRTFMDKCNFELAGALFYPYANEAGLRATMDLVNLLWLYDELTDTKTETEAVNAAHIVACALREPDFDDGTWICSMIKDFNQRHISKAGPNTAYRFIYNFCNYVEAVGTEAGLRAKNEILDITTYISFRRETSALRLTFDLVQYCLGIDLPQYVHDDPVFASGYNAAMDLVCWTNDLFSYNREQAKGHAGANVVTVIMKSKGVDIQSAVDFVGGYCEALTSQLVEARRILLSRSHRVYSKDAVRILEAFGDFVRGNDQWSFASERYFGQKNKVVKESRIVEIITPFSDLIAINE</sequence>